<comment type="function">
    <text evidence="1">Binds with low affinity to dsDNA and ssRNA, and with high affinity to dsRNA, with no detectable sequence specificity.</text>
</comment>
<comment type="subunit">
    <text evidence="1">Forms a heteromeric complex with XPO5 and ILF3. Found in a nuclear export complex with XPO5, RAN, ILF3, ZNF346 and double-stranded RNA. Interacts with XPO5. Interacts with ILF3 in an RNA-independent manner (By similarity).</text>
</comment>
<comment type="subcellular location">
    <subcellularLocation>
        <location evidence="1">Nucleus</location>
        <location evidence="1">Nucleolus</location>
    </subcellularLocation>
    <subcellularLocation>
        <location evidence="1">Cytoplasm</location>
    </subcellularLocation>
    <text evidence="1">Nuclear at steady state, primarily in the nucleolus. Shuttles between the nucleus and cytoplasm when associated with XPO5 (By similarity).</text>
</comment>
<comment type="domain">
    <text evidence="1">The zinc-finger domains are required for binding to dsRNA, and also for nuclear localization.</text>
</comment>
<reference key="1">
    <citation type="submission" date="2004-11" db="EMBL/GenBank/DDBJ databases">
        <authorList>
            <consortium name="The German cDNA consortium"/>
        </authorList>
    </citation>
    <scope>NUCLEOTIDE SEQUENCE [LARGE SCALE MRNA]</scope>
    <source>
        <tissue>Brain cortex</tissue>
    </source>
</reference>
<sequence length="310" mass="34629">MEYPAPAAVQAADGGGAGPYNSSELLEGQEPDGVRFDRERARRLWEAVSGAQPVGREEVEHMIQKNQCLFTNTQCKVCCALLISESQKLAHYQSKKHANKVKRYLAIHGMETLKGETKKLDSDQKSSRSKDKNQCCPICNMTFSSPVVAQSHYLGKTHAKNLKLKQQSTKVEALSKRLTNPFLVASTLALHQNREMIDPDKFCSLCHATFNDPVMAQQHYVGKKHRKQETKLKLMARYGRLADPAVTDFPAGKGYPCKTCKIVLNSIEQYQAHVSGFKHKNQSPKTVASSLGQIPMQRQPIQKDSTTLED</sequence>
<gene>
    <name type="primary">ZNF346</name>
</gene>
<accession>Q5R4W8</accession>
<feature type="chain" id="PRO_0000191811" description="Zinc finger protein 346">
    <location>
        <begin position="1"/>
        <end position="310"/>
    </location>
</feature>
<feature type="zinc finger region" description="Matrin-type 1">
    <location>
        <begin position="70"/>
        <end position="104"/>
    </location>
</feature>
<feature type="zinc finger region" description="Matrin-type 2">
    <location>
        <begin position="131"/>
        <end position="165"/>
    </location>
</feature>
<feature type="zinc finger region" description="Matrin-type 3">
    <location>
        <begin position="198"/>
        <end position="232"/>
    </location>
</feature>
<feature type="zinc finger region" description="Matrin-type 4">
    <location>
        <begin position="252"/>
        <end position="286"/>
    </location>
</feature>
<feature type="region of interest" description="Disordered" evidence="3">
    <location>
        <begin position="1"/>
        <end position="33"/>
    </location>
</feature>
<feature type="region of interest" description="Disordered" evidence="3">
    <location>
        <begin position="278"/>
        <end position="310"/>
    </location>
</feature>
<feature type="compositionally biased region" description="Low complexity" evidence="3">
    <location>
        <begin position="1"/>
        <end position="12"/>
    </location>
</feature>
<feature type="compositionally biased region" description="Polar residues" evidence="3">
    <location>
        <begin position="283"/>
        <end position="292"/>
    </location>
</feature>
<feature type="compositionally biased region" description="Polar residues" evidence="3">
    <location>
        <begin position="299"/>
        <end position="310"/>
    </location>
</feature>
<feature type="binding site" evidence="1">
    <location>
        <position position="75"/>
    </location>
    <ligand>
        <name>Zn(2+)</name>
        <dbReference type="ChEBI" id="CHEBI:29105"/>
        <label>1</label>
    </ligand>
</feature>
<feature type="binding site" evidence="1">
    <location>
        <position position="78"/>
    </location>
    <ligand>
        <name>Zn(2+)</name>
        <dbReference type="ChEBI" id="CHEBI:29105"/>
        <label>1</label>
    </ligand>
</feature>
<feature type="binding site" evidence="1">
    <location>
        <position position="91"/>
    </location>
    <ligand>
        <name>Zn(2+)</name>
        <dbReference type="ChEBI" id="CHEBI:29105"/>
        <label>1</label>
    </ligand>
</feature>
<feature type="binding site" evidence="1">
    <location>
        <position position="97"/>
    </location>
    <ligand>
        <name>Zn(2+)</name>
        <dbReference type="ChEBI" id="CHEBI:29105"/>
        <label>1</label>
    </ligand>
</feature>
<feature type="binding site" evidence="1">
    <location>
        <position position="136"/>
    </location>
    <ligand>
        <name>Zn(2+)</name>
        <dbReference type="ChEBI" id="CHEBI:29105"/>
        <label>2</label>
    </ligand>
</feature>
<feature type="binding site" evidence="1">
    <location>
        <position position="139"/>
    </location>
    <ligand>
        <name>Zn(2+)</name>
        <dbReference type="ChEBI" id="CHEBI:29105"/>
        <label>2</label>
    </ligand>
</feature>
<feature type="binding site" evidence="1">
    <location>
        <position position="152"/>
    </location>
    <ligand>
        <name>Zn(2+)</name>
        <dbReference type="ChEBI" id="CHEBI:29105"/>
        <label>2</label>
    </ligand>
</feature>
<feature type="binding site" evidence="1">
    <location>
        <position position="158"/>
    </location>
    <ligand>
        <name>Zn(2+)</name>
        <dbReference type="ChEBI" id="CHEBI:29105"/>
        <label>2</label>
    </ligand>
</feature>
<feature type="modified residue" description="N-acetylmethionine" evidence="2">
    <location>
        <position position="1"/>
    </location>
</feature>
<feature type="cross-link" description="Glycyl lysine isopeptide (Lys-Gly) (interchain with G-Cter in SUMO2)" evidence="2">
    <location>
        <position position="114"/>
    </location>
</feature>
<feature type="cross-link" description="Glycyl lysine isopeptide (Lys-Gly) (interchain with G-Cter in SUMO2)" evidence="2">
    <location>
        <position position="170"/>
    </location>
</feature>
<organism>
    <name type="scientific">Pongo abelii</name>
    <name type="common">Sumatran orangutan</name>
    <name type="synonym">Pongo pygmaeus abelii</name>
    <dbReference type="NCBI Taxonomy" id="9601"/>
    <lineage>
        <taxon>Eukaryota</taxon>
        <taxon>Metazoa</taxon>
        <taxon>Chordata</taxon>
        <taxon>Craniata</taxon>
        <taxon>Vertebrata</taxon>
        <taxon>Euteleostomi</taxon>
        <taxon>Mammalia</taxon>
        <taxon>Eutheria</taxon>
        <taxon>Euarchontoglires</taxon>
        <taxon>Primates</taxon>
        <taxon>Haplorrhini</taxon>
        <taxon>Catarrhini</taxon>
        <taxon>Hominidae</taxon>
        <taxon>Pongo</taxon>
    </lineage>
</organism>
<dbReference type="EMBL" id="CR861122">
    <property type="protein sequence ID" value="CAH93198.1"/>
    <property type="molecule type" value="mRNA"/>
</dbReference>
<dbReference type="RefSeq" id="NP_001126881.1">
    <property type="nucleotide sequence ID" value="NM_001133409.1"/>
</dbReference>
<dbReference type="BMRB" id="Q5R4W8"/>
<dbReference type="SMR" id="Q5R4W8"/>
<dbReference type="FunCoup" id="Q5R4W8">
    <property type="interactions" value="2590"/>
</dbReference>
<dbReference type="STRING" id="9601.ENSPPYP00000017998"/>
<dbReference type="GeneID" id="100173894"/>
<dbReference type="KEGG" id="pon:100173894"/>
<dbReference type="CTD" id="23567"/>
<dbReference type="InParanoid" id="Q5R4W8"/>
<dbReference type="OrthoDB" id="1925236at2759"/>
<dbReference type="Proteomes" id="UP000001595">
    <property type="component" value="Unplaced"/>
</dbReference>
<dbReference type="GO" id="GO:0005737">
    <property type="term" value="C:cytoplasm"/>
    <property type="evidence" value="ECO:0007669"/>
    <property type="project" value="UniProtKB-SubCell"/>
</dbReference>
<dbReference type="GO" id="GO:0005730">
    <property type="term" value="C:nucleolus"/>
    <property type="evidence" value="ECO:0007669"/>
    <property type="project" value="UniProtKB-SubCell"/>
</dbReference>
<dbReference type="GO" id="GO:0005634">
    <property type="term" value="C:nucleus"/>
    <property type="evidence" value="ECO:0000250"/>
    <property type="project" value="UniProtKB"/>
</dbReference>
<dbReference type="GO" id="GO:0003725">
    <property type="term" value="F:double-stranded RNA binding"/>
    <property type="evidence" value="ECO:0000250"/>
    <property type="project" value="UniProtKB"/>
</dbReference>
<dbReference type="GO" id="GO:0008270">
    <property type="term" value="F:zinc ion binding"/>
    <property type="evidence" value="ECO:0007669"/>
    <property type="project" value="UniProtKB-KW"/>
</dbReference>
<dbReference type="FunFam" id="3.30.160.60:FF:000581">
    <property type="entry name" value="zinc finger protein 346 isoform X1"/>
    <property type="match status" value="1"/>
</dbReference>
<dbReference type="FunFam" id="3.30.160.60:FF:000668">
    <property type="entry name" value="zinc finger protein 346 isoform X1"/>
    <property type="match status" value="1"/>
</dbReference>
<dbReference type="FunFam" id="3.30.160.60:FF:000700">
    <property type="entry name" value="zinc finger protein 346 isoform X1"/>
    <property type="match status" value="1"/>
</dbReference>
<dbReference type="FunFam" id="3.30.160.60:FF:000722">
    <property type="entry name" value="zinc finger protein 346 isoform X1"/>
    <property type="match status" value="1"/>
</dbReference>
<dbReference type="Gene3D" id="3.30.160.60">
    <property type="entry name" value="Classic Zinc Finger"/>
    <property type="match status" value="4"/>
</dbReference>
<dbReference type="InterPro" id="IPR003604">
    <property type="entry name" value="Matrin/U1-like-C_Znf_C2H2"/>
</dbReference>
<dbReference type="InterPro" id="IPR051868">
    <property type="entry name" value="ZN346_ZMAT4"/>
</dbReference>
<dbReference type="InterPro" id="IPR036236">
    <property type="entry name" value="Znf_C2H2_sf"/>
</dbReference>
<dbReference type="InterPro" id="IPR013087">
    <property type="entry name" value="Znf_C2H2_type"/>
</dbReference>
<dbReference type="PANTHER" id="PTHR46144:SF5">
    <property type="entry name" value="ZINC FINGER PROTEIN 346"/>
    <property type="match status" value="1"/>
</dbReference>
<dbReference type="PANTHER" id="PTHR46144">
    <property type="entry name" value="ZINC FINGER PROTEIN 385B-LIKE"/>
    <property type="match status" value="1"/>
</dbReference>
<dbReference type="Pfam" id="PF12874">
    <property type="entry name" value="zf-met"/>
    <property type="match status" value="4"/>
</dbReference>
<dbReference type="SMART" id="SM00355">
    <property type="entry name" value="ZnF_C2H2"/>
    <property type="match status" value="4"/>
</dbReference>
<dbReference type="SMART" id="SM00451">
    <property type="entry name" value="ZnF_U1"/>
    <property type="match status" value="4"/>
</dbReference>
<dbReference type="SUPFAM" id="SSF57667">
    <property type="entry name" value="beta-beta-alpha zinc fingers"/>
    <property type="match status" value="4"/>
</dbReference>
<keyword id="KW-0007">Acetylation</keyword>
<keyword id="KW-0963">Cytoplasm</keyword>
<keyword id="KW-1017">Isopeptide bond</keyword>
<keyword id="KW-0479">Metal-binding</keyword>
<keyword id="KW-0539">Nucleus</keyword>
<keyword id="KW-1185">Reference proteome</keyword>
<keyword id="KW-0677">Repeat</keyword>
<keyword id="KW-0694">RNA-binding</keyword>
<keyword id="KW-0832">Ubl conjugation</keyword>
<keyword id="KW-0862">Zinc</keyword>
<keyword id="KW-0863">Zinc-finger</keyword>
<name>ZN346_PONAB</name>
<evidence type="ECO:0000250" key="1"/>
<evidence type="ECO:0000250" key="2">
    <source>
        <dbReference type="UniProtKB" id="Q9UL40"/>
    </source>
</evidence>
<evidence type="ECO:0000256" key="3">
    <source>
        <dbReference type="SAM" id="MobiDB-lite"/>
    </source>
</evidence>
<proteinExistence type="evidence at transcript level"/>
<protein>
    <recommendedName>
        <fullName>Zinc finger protein 346</fullName>
    </recommendedName>
</protein>